<feature type="chain" id="PRO_1000184675" description="ATP synthase subunit delta">
    <location>
        <begin position="1"/>
        <end position="179"/>
    </location>
</feature>
<evidence type="ECO:0000255" key="1">
    <source>
        <dbReference type="HAMAP-Rule" id="MF_01416"/>
    </source>
</evidence>
<proteinExistence type="inferred from homology"/>
<accession>A7G9Q6</accession>
<protein>
    <recommendedName>
        <fullName evidence="1">ATP synthase subunit delta</fullName>
    </recommendedName>
    <alternativeName>
        <fullName evidence="1">ATP synthase F(1) sector subunit delta</fullName>
    </alternativeName>
    <alternativeName>
        <fullName evidence="1">F-type ATPase subunit delta</fullName>
        <shortName evidence="1">F-ATPase subunit delta</shortName>
    </alternativeName>
</protein>
<reference key="1">
    <citation type="submission" date="2007-06" db="EMBL/GenBank/DDBJ databases">
        <authorList>
            <person name="Brinkac L.M."/>
            <person name="Daugherty S."/>
            <person name="Dodson R.J."/>
            <person name="Madupu R."/>
            <person name="Brown J.L."/>
            <person name="Bruce D."/>
            <person name="Detter C."/>
            <person name="Munk C."/>
            <person name="Smith L.A."/>
            <person name="Smith T.J."/>
            <person name="White O."/>
            <person name="Brettin T.S."/>
        </authorList>
    </citation>
    <scope>NUCLEOTIDE SEQUENCE [LARGE SCALE GENOMIC DNA]</scope>
    <source>
        <strain>Langeland / NCTC 10281 / Type F</strain>
    </source>
</reference>
<gene>
    <name evidence="1" type="primary">atpH</name>
    <name type="ordered locus">CLI_0208</name>
</gene>
<sequence length="179" mass="21275">MYEYLDRRYALALYEVAEENNKVDEYLRDLKEVVNIIKNSEDICKILKHPEINTSRKKEIFTELFKDKVDDKILSFLLVLIEKDRILYLEEKLKEMEKIYLEKNNMISANVKTVIPLLKEEREELIEKLGNKYNKKIILEEEIDKSIIGGVYVRVGDDVLDGTLSTRLKDIKKMMLKRE</sequence>
<name>ATPD_CLOBL</name>
<dbReference type="EMBL" id="CP000728">
    <property type="protein sequence ID" value="ABS42501.1"/>
    <property type="molecule type" value="Genomic_DNA"/>
</dbReference>
<dbReference type="RefSeq" id="WP_011987238.1">
    <property type="nucleotide sequence ID" value="NC_009699.1"/>
</dbReference>
<dbReference type="SMR" id="A7G9Q6"/>
<dbReference type="KEGG" id="cbf:CLI_0208"/>
<dbReference type="HOGENOM" id="CLU_085114_4_0_9"/>
<dbReference type="Proteomes" id="UP000002410">
    <property type="component" value="Chromosome"/>
</dbReference>
<dbReference type="GO" id="GO:0005886">
    <property type="term" value="C:plasma membrane"/>
    <property type="evidence" value="ECO:0007669"/>
    <property type="project" value="UniProtKB-SubCell"/>
</dbReference>
<dbReference type="GO" id="GO:0045259">
    <property type="term" value="C:proton-transporting ATP synthase complex"/>
    <property type="evidence" value="ECO:0007669"/>
    <property type="project" value="UniProtKB-KW"/>
</dbReference>
<dbReference type="GO" id="GO:0046933">
    <property type="term" value="F:proton-transporting ATP synthase activity, rotational mechanism"/>
    <property type="evidence" value="ECO:0007669"/>
    <property type="project" value="UniProtKB-UniRule"/>
</dbReference>
<dbReference type="Gene3D" id="1.10.520.20">
    <property type="entry name" value="N-terminal domain of the delta subunit of the F1F0-ATP synthase"/>
    <property type="match status" value="1"/>
</dbReference>
<dbReference type="HAMAP" id="MF_01416">
    <property type="entry name" value="ATP_synth_delta_bact"/>
    <property type="match status" value="1"/>
</dbReference>
<dbReference type="InterPro" id="IPR026015">
    <property type="entry name" value="ATP_synth_OSCP/delta_N_sf"/>
</dbReference>
<dbReference type="InterPro" id="IPR020781">
    <property type="entry name" value="ATPase_OSCP/d_CS"/>
</dbReference>
<dbReference type="InterPro" id="IPR000711">
    <property type="entry name" value="ATPase_OSCP/dsu"/>
</dbReference>
<dbReference type="NCBIfam" id="TIGR01145">
    <property type="entry name" value="ATP_synt_delta"/>
    <property type="match status" value="1"/>
</dbReference>
<dbReference type="NCBIfam" id="NF004403">
    <property type="entry name" value="PRK05758.2-4"/>
    <property type="match status" value="1"/>
</dbReference>
<dbReference type="PANTHER" id="PTHR11910">
    <property type="entry name" value="ATP SYNTHASE DELTA CHAIN"/>
    <property type="match status" value="1"/>
</dbReference>
<dbReference type="Pfam" id="PF00213">
    <property type="entry name" value="OSCP"/>
    <property type="match status" value="1"/>
</dbReference>
<dbReference type="PRINTS" id="PR00125">
    <property type="entry name" value="ATPASEDELTA"/>
</dbReference>
<dbReference type="SUPFAM" id="SSF47928">
    <property type="entry name" value="N-terminal domain of the delta subunit of the F1F0-ATP synthase"/>
    <property type="match status" value="1"/>
</dbReference>
<dbReference type="PROSITE" id="PS00389">
    <property type="entry name" value="ATPASE_DELTA"/>
    <property type="match status" value="1"/>
</dbReference>
<organism>
    <name type="scientific">Clostridium botulinum (strain Langeland / NCTC 10281 / Type F)</name>
    <dbReference type="NCBI Taxonomy" id="441772"/>
    <lineage>
        <taxon>Bacteria</taxon>
        <taxon>Bacillati</taxon>
        <taxon>Bacillota</taxon>
        <taxon>Clostridia</taxon>
        <taxon>Eubacteriales</taxon>
        <taxon>Clostridiaceae</taxon>
        <taxon>Clostridium</taxon>
    </lineage>
</organism>
<keyword id="KW-0066">ATP synthesis</keyword>
<keyword id="KW-1003">Cell membrane</keyword>
<keyword id="KW-0139">CF(1)</keyword>
<keyword id="KW-0375">Hydrogen ion transport</keyword>
<keyword id="KW-0406">Ion transport</keyword>
<keyword id="KW-0472">Membrane</keyword>
<keyword id="KW-0813">Transport</keyword>
<comment type="function">
    <text evidence="1">F(1)F(0) ATP synthase produces ATP from ADP in the presence of a proton or sodium gradient. F-type ATPases consist of two structural domains, F(1) containing the extramembraneous catalytic core and F(0) containing the membrane proton channel, linked together by a central stalk and a peripheral stalk. During catalysis, ATP synthesis in the catalytic domain of F(1) is coupled via a rotary mechanism of the central stalk subunits to proton translocation.</text>
</comment>
<comment type="function">
    <text evidence="1">This protein is part of the stalk that links CF(0) to CF(1). It either transmits conformational changes from CF(0) to CF(1) or is implicated in proton conduction.</text>
</comment>
<comment type="subunit">
    <text evidence="1">F-type ATPases have 2 components, F(1) - the catalytic core - and F(0) - the membrane proton channel. F(1) has five subunits: alpha(3), beta(3), gamma(1), delta(1), epsilon(1). F(0) has three main subunits: a(1), b(2) and c(10-14). The alpha and beta chains form an alternating ring which encloses part of the gamma chain. F(1) is attached to F(0) by a central stalk formed by the gamma and epsilon chains, while a peripheral stalk is formed by the delta and b chains.</text>
</comment>
<comment type="subcellular location">
    <subcellularLocation>
        <location evidence="1">Cell membrane</location>
        <topology evidence="1">Peripheral membrane protein</topology>
    </subcellularLocation>
</comment>
<comment type="similarity">
    <text evidence="1">Belongs to the ATPase delta chain family.</text>
</comment>